<sequence>MLTIALPKGALLKDSIRLLQSAGLDFSAFLEPGNRQLQILDRQERAKALLVRNSDVPVYVEYGQAQLGVVGYDVLREKTARVAQLIDLRFGGCRMSIAVKASSPYRSVLDLPAHCRIASKFVHCARDYFHNLDLPVEIVPLSGSVELGPITGMSEAIVDLVATGQTLRENGLVEIETLFDSTARLIANPLAYRINADGISELIEELRQSVTQAIAATC</sequence>
<organism>
    <name type="scientific">Synechococcus elongatus (strain ATCC 33912 / PCC 7942 / FACHB-805)</name>
    <name type="common">Anacystis nidulans R2</name>
    <dbReference type="NCBI Taxonomy" id="1140"/>
    <lineage>
        <taxon>Bacteria</taxon>
        <taxon>Bacillati</taxon>
        <taxon>Cyanobacteriota</taxon>
        <taxon>Cyanophyceae</taxon>
        <taxon>Synechococcales</taxon>
        <taxon>Synechococcaceae</taxon>
        <taxon>Synechococcus</taxon>
    </lineage>
</organism>
<keyword id="KW-0028">Amino-acid biosynthesis</keyword>
<keyword id="KW-0067">ATP-binding</keyword>
<keyword id="KW-0963">Cytoplasm</keyword>
<keyword id="KW-0328">Glycosyltransferase</keyword>
<keyword id="KW-0368">Histidine biosynthesis</keyword>
<keyword id="KW-0547">Nucleotide-binding</keyword>
<keyword id="KW-1185">Reference proteome</keyword>
<keyword id="KW-0808">Transferase</keyword>
<protein>
    <recommendedName>
        <fullName evidence="1">ATP phosphoribosyltransferase</fullName>
        <shortName evidence="1">ATP-PRT</shortName>
        <shortName evidence="1">ATP-PRTase</shortName>
        <ecNumber evidence="1">2.4.2.17</ecNumber>
    </recommendedName>
</protein>
<reference key="1">
    <citation type="submission" date="2005-08" db="EMBL/GenBank/DDBJ databases">
        <title>Complete sequence of chromosome 1 of Synechococcus elongatus PCC 7942.</title>
        <authorList>
            <consortium name="US DOE Joint Genome Institute"/>
            <person name="Copeland A."/>
            <person name="Lucas S."/>
            <person name="Lapidus A."/>
            <person name="Barry K."/>
            <person name="Detter J.C."/>
            <person name="Glavina T."/>
            <person name="Hammon N."/>
            <person name="Israni S."/>
            <person name="Pitluck S."/>
            <person name="Schmutz J."/>
            <person name="Larimer F."/>
            <person name="Land M."/>
            <person name="Kyrpides N."/>
            <person name="Lykidis A."/>
            <person name="Golden S."/>
            <person name="Richardson P."/>
        </authorList>
    </citation>
    <scope>NUCLEOTIDE SEQUENCE [LARGE SCALE GENOMIC DNA]</scope>
    <source>
        <strain>ATCC 33912 / PCC 7942 / FACHB-805</strain>
    </source>
</reference>
<comment type="function">
    <text evidence="1">Catalyzes the condensation of ATP and 5-phosphoribose 1-diphosphate to form N'-(5'-phosphoribosyl)-ATP (PR-ATP). Has a crucial role in the pathway because the rate of histidine biosynthesis seems to be controlled primarily by regulation of HisG enzymatic activity.</text>
</comment>
<comment type="catalytic activity">
    <reaction evidence="1">
        <text>1-(5-phospho-beta-D-ribosyl)-ATP + diphosphate = 5-phospho-alpha-D-ribose 1-diphosphate + ATP</text>
        <dbReference type="Rhea" id="RHEA:18473"/>
        <dbReference type="ChEBI" id="CHEBI:30616"/>
        <dbReference type="ChEBI" id="CHEBI:33019"/>
        <dbReference type="ChEBI" id="CHEBI:58017"/>
        <dbReference type="ChEBI" id="CHEBI:73183"/>
        <dbReference type="EC" id="2.4.2.17"/>
    </reaction>
</comment>
<comment type="pathway">
    <text evidence="1">Amino-acid biosynthesis; L-histidine biosynthesis; L-histidine from 5-phospho-alpha-D-ribose 1-diphosphate: step 1/9.</text>
</comment>
<comment type="subunit">
    <text evidence="1">Heteromultimer composed of HisG and HisZ subunits.</text>
</comment>
<comment type="subcellular location">
    <subcellularLocation>
        <location evidence="1">Cytoplasm</location>
    </subcellularLocation>
</comment>
<comment type="domain">
    <text>Lacks the C-terminal regulatory region which is replaced by HisZ.</text>
</comment>
<comment type="similarity">
    <text evidence="1">Belongs to the ATP phosphoribosyltransferase family. Short subfamily.</text>
</comment>
<proteinExistence type="inferred from homology"/>
<feature type="chain" id="PRO_1000063313" description="ATP phosphoribosyltransferase">
    <location>
        <begin position="1"/>
        <end position="218"/>
    </location>
</feature>
<accession>Q31Q54</accession>
<evidence type="ECO:0000255" key="1">
    <source>
        <dbReference type="HAMAP-Rule" id="MF_01018"/>
    </source>
</evidence>
<dbReference type="EC" id="2.4.2.17" evidence="1"/>
<dbReference type="EMBL" id="CP000100">
    <property type="protein sequence ID" value="ABB56815.1"/>
    <property type="molecule type" value="Genomic_DNA"/>
</dbReference>
<dbReference type="RefSeq" id="WP_011243066.1">
    <property type="nucleotide sequence ID" value="NZ_JACJTX010000005.1"/>
</dbReference>
<dbReference type="SMR" id="Q31Q54"/>
<dbReference type="STRING" id="1140.Synpcc7942_0783"/>
<dbReference type="PaxDb" id="1140-Synpcc7942_0783"/>
<dbReference type="GeneID" id="72429629"/>
<dbReference type="KEGG" id="syf:Synpcc7942_0783"/>
<dbReference type="eggNOG" id="COG0040">
    <property type="taxonomic scope" value="Bacteria"/>
</dbReference>
<dbReference type="HOGENOM" id="CLU_038115_2_0_3"/>
<dbReference type="OrthoDB" id="9801867at2"/>
<dbReference type="BioCyc" id="SYNEL:SYNPCC7942_0783-MONOMER"/>
<dbReference type="UniPathway" id="UPA00031">
    <property type="reaction ID" value="UER00006"/>
</dbReference>
<dbReference type="Proteomes" id="UP000889800">
    <property type="component" value="Chromosome"/>
</dbReference>
<dbReference type="GO" id="GO:0005737">
    <property type="term" value="C:cytoplasm"/>
    <property type="evidence" value="ECO:0007669"/>
    <property type="project" value="UniProtKB-SubCell"/>
</dbReference>
<dbReference type="GO" id="GO:0005524">
    <property type="term" value="F:ATP binding"/>
    <property type="evidence" value="ECO:0007669"/>
    <property type="project" value="UniProtKB-KW"/>
</dbReference>
<dbReference type="GO" id="GO:0003879">
    <property type="term" value="F:ATP phosphoribosyltransferase activity"/>
    <property type="evidence" value="ECO:0007669"/>
    <property type="project" value="UniProtKB-UniRule"/>
</dbReference>
<dbReference type="GO" id="GO:0000105">
    <property type="term" value="P:L-histidine biosynthetic process"/>
    <property type="evidence" value="ECO:0007669"/>
    <property type="project" value="UniProtKB-UniRule"/>
</dbReference>
<dbReference type="CDD" id="cd13595">
    <property type="entry name" value="PBP2_HisGs"/>
    <property type="match status" value="1"/>
</dbReference>
<dbReference type="FunFam" id="3.40.190.10:FF:000008">
    <property type="entry name" value="ATP phosphoribosyltransferase"/>
    <property type="match status" value="1"/>
</dbReference>
<dbReference type="Gene3D" id="3.40.190.10">
    <property type="entry name" value="Periplasmic binding protein-like II"/>
    <property type="match status" value="2"/>
</dbReference>
<dbReference type="HAMAP" id="MF_01018">
    <property type="entry name" value="HisG_Short"/>
    <property type="match status" value="1"/>
</dbReference>
<dbReference type="InterPro" id="IPR013820">
    <property type="entry name" value="ATP_PRibTrfase_cat"/>
</dbReference>
<dbReference type="InterPro" id="IPR018198">
    <property type="entry name" value="ATP_PRibTrfase_CS"/>
</dbReference>
<dbReference type="InterPro" id="IPR001348">
    <property type="entry name" value="ATP_PRibTrfase_HisG"/>
</dbReference>
<dbReference type="InterPro" id="IPR024893">
    <property type="entry name" value="ATP_PRibTrfase_HisG_short"/>
</dbReference>
<dbReference type="NCBIfam" id="TIGR00070">
    <property type="entry name" value="hisG"/>
    <property type="match status" value="1"/>
</dbReference>
<dbReference type="PANTHER" id="PTHR21403:SF8">
    <property type="entry name" value="ATP PHOSPHORIBOSYLTRANSFERASE"/>
    <property type="match status" value="1"/>
</dbReference>
<dbReference type="PANTHER" id="PTHR21403">
    <property type="entry name" value="ATP PHOSPHORIBOSYLTRANSFERASE ATP-PRTASE"/>
    <property type="match status" value="1"/>
</dbReference>
<dbReference type="Pfam" id="PF01634">
    <property type="entry name" value="HisG"/>
    <property type="match status" value="1"/>
</dbReference>
<dbReference type="SUPFAM" id="SSF53850">
    <property type="entry name" value="Periplasmic binding protein-like II"/>
    <property type="match status" value="1"/>
</dbReference>
<dbReference type="PROSITE" id="PS01316">
    <property type="entry name" value="ATP_P_PHORIBOSYLTR"/>
    <property type="match status" value="1"/>
</dbReference>
<name>HIS1_SYNE7</name>
<gene>
    <name evidence="1" type="primary">hisG</name>
    <name type="ordered locus">Synpcc7942_0783</name>
</gene>